<sequence>MNLLILFFGYLFGSFPSGYLAGRIAKGIDIRSLGSGSTGATNVLRHIGKRAAITVFLLDVFKGVLSILLAKYLLLNDSWQVAVGLSTLIGHIWPVWLNWKGGKAVATGLGIFLGLSWQVGLATLGVFIIMITLFRIVSLASVSASLALPLIMFLSFSGSNLSLPFLIVSLLAMILVIWRHRENIVRLIRGKEPRIGQP</sequence>
<evidence type="ECO:0000255" key="1">
    <source>
        <dbReference type="HAMAP-Rule" id="MF_01043"/>
    </source>
</evidence>
<name>PLSY_PROMT</name>
<comment type="function">
    <text evidence="1">Catalyzes the transfer of an acyl group from acyl-phosphate (acyl-PO(4)) to glycerol-3-phosphate (G3P) to form lysophosphatidic acid (LPA). This enzyme utilizes acyl-phosphate as fatty acyl donor, but not acyl-CoA or acyl-ACP.</text>
</comment>
<comment type="catalytic activity">
    <reaction evidence="1">
        <text>an acyl phosphate + sn-glycerol 3-phosphate = a 1-acyl-sn-glycero-3-phosphate + phosphate</text>
        <dbReference type="Rhea" id="RHEA:34075"/>
        <dbReference type="ChEBI" id="CHEBI:43474"/>
        <dbReference type="ChEBI" id="CHEBI:57597"/>
        <dbReference type="ChEBI" id="CHEBI:57970"/>
        <dbReference type="ChEBI" id="CHEBI:59918"/>
        <dbReference type="EC" id="2.3.1.275"/>
    </reaction>
</comment>
<comment type="pathway">
    <text evidence="1">Lipid metabolism; phospholipid metabolism.</text>
</comment>
<comment type="subunit">
    <text evidence="1">Probably interacts with PlsX.</text>
</comment>
<comment type="subcellular location">
    <subcellularLocation>
        <location evidence="1">Cell inner membrane</location>
        <topology evidence="1">Multi-pass membrane protein</topology>
    </subcellularLocation>
</comment>
<comment type="similarity">
    <text evidence="1">Belongs to the PlsY family.</text>
</comment>
<dbReference type="EC" id="2.3.1.275" evidence="1"/>
<dbReference type="EMBL" id="CP000095">
    <property type="protein sequence ID" value="AAZ58389.1"/>
    <property type="molecule type" value="Genomic_DNA"/>
</dbReference>
<dbReference type="RefSeq" id="WP_011295246.1">
    <property type="nucleotide sequence ID" value="NC_007335.2"/>
</dbReference>
<dbReference type="SMR" id="Q46JD9"/>
<dbReference type="STRING" id="59920.PMN2A_0898"/>
<dbReference type="KEGG" id="pmn:PMN2A_0898"/>
<dbReference type="HOGENOM" id="CLU_081254_7_1_3"/>
<dbReference type="OrthoDB" id="9777124at2"/>
<dbReference type="PhylomeDB" id="Q46JD9"/>
<dbReference type="UniPathway" id="UPA00085"/>
<dbReference type="Proteomes" id="UP000002535">
    <property type="component" value="Chromosome"/>
</dbReference>
<dbReference type="GO" id="GO:0005886">
    <property type="term" value="C:plasma membrane"/>
    <property type="evidence" value="ECO:0007669"/>
    <property type="project" value="UniProtKB-SubCell"/>
</dbReference>
<dbReference type="GO" id="GO:0043772">
    <property type="term" value="F:acyl-phosphate glycerol-3-phosphate acyltransferase activity"/>
    <property type="evidence" value="ECO:0007669"/>
    <property type="project" value="UniProtKB-UniRule"/>
</dbReference>
<dbReference type="GO" id="GO:0008654">
    <property type="term" value="P:phospholipid biosynthetic process"/>
    <property type="evidence" value="ECO:0007669"/>
    <property type="project" value="UniProtKB-UniRule"/>
</dbReference>
<dbReference type="HAMAP" id="MF_01043">
    <property type="entry name" value="PlsY"/>
    <property type="match status" value="1"/>
</dbReference>
<dbReference type="InterPro" id="IPR003811">
    <property type="entry name" value="G3P_acylTferase_PlsY"/>
</dbReference>
<dbReference type="NCBIfam" id="TIGR00023">
    <property type="entry name" value="glycerol-3-phosphate 1-O-acyltransferase PlsY"/>
    <property type="match status" value="1"/>
</dbReference>
<dbReference type="PANTHER" id="PTHR30309:SF0">
    <property type="entry name" value="GLYCEROL-3-PHOSPHATE ACYLTRANSFERASE-RELATED"/>
    <property type="match status" value="1"/>
</dbReference>
<dbReference type="PANTHER" id="PTHR30309">
    <property type="entry name" value="INNER MEMBRANE PROTEIN YGIH"/>
    <property type="match status" value="1"/>
</dbReference>
<dbReference type="Pfam" id="PF02660">
    <property type="entry name" value="G3P_acyltransf"/>
    <property type="match status" value="1"/>
</dbReference>
<dbReference type="SMART" id="SM01207">
    <property type="entry name" value="G3P_acyltransf"/>
    <property type="match status" value="1"/>
</dbReference>
<proteinExistence type="inferred from homology"/>
<gene>
    <name evidence="1" type="primary">plsY</name>
    <name type="ordered locus">PMN2A_0898</name>
</gene>
<protein>
    <recommendedName>
        <fullName evidence="1">Glycerol-3-phosphate acyltransferase</fullName>
    </recommendedName>
    <alternativeName>
        <fullName evidence="1">Acyl-PO4 G3P acyltransferase</fullName>
    </alternativeName>
    <alternativeName>
        <fullName evidence="1">Acyl-phosphate--glycerol-3-phosphate acyltransferase</fullName>
    </alternativeName>
    <alternativeName>
        <fullName evidence="1">G3P acyltransferase</fullName>
        <shortName evidence="1">GPAT</shortName>
        <ecNumber evidence="1">2.3.1.275</ecNumber>
    </alternativeName>
    <alternativeName>
        <fullName evidence="1">Lysophosphatidic acid synthase</fullName>
        <shortName evidence="1">LPA synthase</shortName>
    </alternativeName>
</protein>
<feature type="chain" id="PRO_0000188425" description="Glycerol-3-phosphate acyltransferase">
    <location>
        <begin position="1"/>
        <end position="198"/>
    </location>
</feature>
<feature type="transmembrane region" description="Helical" evidence="1">
    <location>
        <begin position="1"/>
        <end position="21"/>
    </location>
</feature>
<feature type="transmembrane region" description="Helical" evidence="1">
    <location>
        <begin position="55"/>
        <end position="75"/>
    </location>
</feature>
<feature type="transmembrane region" description="Helical" evidence="1">
    <location>
        <begin position="79"/>
        <end position="99"/>
    </location>
</feature>
<feature type="transmembrane region" description="Helical" evidence="1">
    <location>
        <begin position="111"/>
        <end position="131"/>
    </location>
</feature>
<feature type="transmembrane region" description="Helical" evidence="1">
    <location>
        <begin position="136"/>
        <end position="156"/>
    </location>
</feature>
<feature type="transmembrane region" description="Helical" evidence="1">
    <location>
        <begin position="158"/>
        <end position="178"/>
    </location>
</feature>
<keyword id="KW-0997">Cell inner membrane</keyword>
<keyword id="KW-1003">Cell membrane</keyword>
<keyword id="KW-0444">Lipid biosynthesis</keyword>
<keyword id="KW-0443">Lipid metabolism</keyword>
<keyword id="KW-0472">Membrane</keyword>
<keyword id="KW-0594">Phospholipid biosynthesis</keyword>
<keyword id="KW-1208">Phospholipid metabolism</keyword>
<keyword id="KW-1185">Reference proteome</keyword>
<keyword id="KW-0808">Transferase</keyword>
<keyword id="KW-0812">Transmembrane</keyword>
<keyword id="KW-1133">Transmembrane helix</keyword>
<organism>
    <name type="scientific">Prochlorococcus marinus (strain NATL2A)</name>
    <dbReference type="NCBI Taxonomy" id="59920"/>
    <lineage>
        <taxon>Bacteria</taxon>
        <taxon>Bacillati</taxon>
        <taxon>Cyanobacteriota</taxon>
        <taxon>Cyanophyceae</taxon>
        <taxon>Synechococcales</taxon>
        <taxon>Prochlorococcaceae</taxon>
        <taxon>Prochlorococcus</taxon>
    </lineage>
</organism>
<accession>Q46JD9</accession>
<reference key="1">
    <citation type="journal article" date="2007" name="PLoS Genet.">
        <title>Patterns and implications of gene gain and loss in the evolution of Prochlorococcus.</title>
        <authorList>
            <person name="Kettler G.C."/>
            <person name="Martiny A.C."/>
            <person name="Huang K."/>
            <person name="Zucker J."/>
            <person name="Coleman M.L."/>
            <person name="Rodrigue S."/>
            <person name="Chen F."/>
            <person name="Lapidus A."/>
            <person name="Ferriera S."/>
            <person name="Johnson J."/>
            <person name="Steglich C."/>
            <person name="Church G.M."/>
            <person name="Richardson P."/>
            <person name="Chisholm S.W."/>
        </authorList>
    </citation>
    <scope>NUCLEOTIDE SEQUENCE [LARGE SCALE GENOMIC DNA]</scope>
    <source>
        <strain>NATL2A</strain>
    </source>
</reference>